<comment type="function">
    <text evidence="1">Allows the formation of correctly charged Asn-tRNA(Asn) or Gln-tRNA(Gln) through the transamidation of misacylated Asp-tRNA(Asn) or Glu-tRNA(Gln) in organisms which lack either or both of asparaginyl-tRNA or glutaminyl-tRNA synthetases. The reaction takes place in the presence of glutamine and ATP through an activated phospho-Asp-tRNA(Asn) or phospho-Glu-tRNA(Gln).</text>
</comment>
<comment type="catalytic activity">
    <reaction evidence="1">
        <text>L-glutamyl-tRNA(Gln) + L-glutamine + ATP + H2O = L-glutaminyl-tRNA(Gln) + L-glutamate + ADP + phosphate + H(+)</text>
        <dbReference type="Rhea" id="RHEA:17521"/>
        <dbReference type="Rhea" id="RHEA-COMP:9681"/>
        <dbReference type="Rhea" id="RHEA-COMP:9684"/>
        <dbReference type="ChEBI" id="CHEBI:15377"/>
        <dbReference type="ChEBI" id="CHEBI:15378"/>
        <dbReference type="ChEBI" id="CHEBI:29985"/>
        <dbReference type="ChEBI" id="CHEBI:30616"/>
        <dbReference type="ChEBI" id="CHEBI:43474"/>
        <dbReference type="ChEBI" id="CHEBI:58359"/>
        <dbReference type="ChEBI" id="CHEBI:78520"/>
        <dbReference type="ChEBI" id="CHEBI:78521"/>
        <dbReference type="ChEBI" id="CHEBI:456216"/>
    </reaction>
</comment>
<comment type="catalytic activity">
    <reaction evidence="1">
        <text>L-aspartyl-tRNA(Asn) + L-glutamine + ATP + H2O = L-asparaginyl-tRNA(Asn) + L-glutamate + ADP + phosphate + 2 H(+)</text>
        <dbReference type="Rhea" id="RHEA:14513"/>
        <dbReference type="Rhea" id="RHEA-COMP:9674"/>
        <dbReference type="Rhea" id="RHEA-COMP:9677"/>
        <dbReference type="ChEBI" id="CHEBI:15377"/>
        <dbReference type="ChEBI" id="CHEBI:15378"/>
        <dbReference type="ChEBI" id="CHEBI:29985"/>
        <dbReference type="ChEBI" id="CHEBI:30616"/>
        <dbReference type="ChEBI" id="CHEBI:43474"/>
        <dbReference type="ChEBI" id="CHEBI:58359"/>
        <dbReference type="ChEBI" id="CHEBI:78515"/>
        <dbReference type="ChEBI" id="CHEBI:78516"/>
        <dbReference type="ChEBI" id="CHEBI:456216"/>
    </reaction>
</comment>
<comment type="subunit">
    <text evidence="1">Heterotrimer of A, B and C subunits.</text>
</comment>
<comment type="similarity">
    <text evidence="1">Belongs to the GatC family.</text>
</comment>
<accession>Q0AZZ3</accession>
<name>GATC_SYNWW</name>
<dbReference type="EC" id="6.3.5.-" evidence="1"/>
<dbReference type="EMBL" id="CP000448">
    <property type="protein sequence ID" value="ABI67711.1"/>
    <property type="molecule type" value="Genomic_DNA"/>
</dbReference>
<dbReference type="RefSeq" id="WP_011639819.1">
    <property type="nucleotide sequence ID" value="NC_008346.1"/>
</dbReference>
<dbReference type="SMR" id="Q0AZZ3"/>
<dbReference type="STRING" id="335541.Swol_0372"/>
<dbReference type="KEGG" id="swo:Swol_0372"/>
<dbReference type="eggNOG" id="COG0721">
    <property type="taxonomic scope" value="Bacteria"/>
</dbReference>
<dbReference type="HOGENOM" id="CLU_105899_6_1_9"/>
<dbReference type="OrthoDB" id="9813938at2"/>
<dbReference type="Proteomes" id="UP000001968">
    <property type="component" value="Chromosome"/>
</dbReference>
<dbReference type="GO" id="GO:0050566">
    <property type="term" value="F:asparaginyl-tRNA synthase (glutamine-hydrolyzing) activity"/>
    <property type="evidence" value="ECO:0007669"/>
    <property type="project" value="RHEA"/>
</dbReference>
<dbReference type="GO" id="GO:0005524">
    <property type="term" value="F:ATP binding"/>
    <property type="evidence" value="ECO:0007669"/>
    <property type="project" value="UniProtKB-KW"/>
</dbReference>
<dbReference type="GO" id="GO:0050567">
    <property type="term" value="F:glutaminyl-tRNA synthase (glutamine-hydrolyzing) activity"/>
    <property type="evidence" value="ECO:0007669"/>
    <property type="project" value="UniProtKB-UniRule"/>
</dbReference>
<dbReference type="GO" id="GO:0070681">
    <property type="term" value="P:glutaminyl-tRNAGln biosynthesis via transamidation"/>
    <property type="evidence" value="ECO:0007669"/>
    <property type="project" value="TreeGrafter"/>
</dbReference>
<dbReference type="GO" id="GO:0006450">
    <property type="term" value="P:regulation of translational fidelity"/>
    <property type="evidence" value="ECO:0007669"/>
    <property type="project" value="InterPro"/>
</dbReference>
<dbReference type="GO" id="GO:0006412">
    <property type="term" value="P:translation"/>
    <property type="evidence" value="ECO:0007669"/>
    <property type="project" value="UniProtKB-UniRule"/>
</dbReference>
<dbReference type="Gene3D" id="1.10.20.60">
    <property type="entry name" value="Glu-tRNAGln amidotransferase C subunit, N-terminal domain"/>
    <property type="match status" value="1"/>
</dbReference>
<dbReference type="HAMAP" id="MF_00122">
    <property type="entry name" value="GatC"/>
    <property type="match status" value="1"/>
</dbReference>
<dbReference type="InterPro" id="IPR036113">
    <property type="entry name" value="Asp/Glu-ADT_sf_sub_c"/>
</dbReference>
<dbReference type="InterPro" id="IPR003837">
    <property type="entry name" value="GatC"/>
</dbReference>
<dbReference type="NCBIfam" id="TIGR00135">
    <property type="entry name" value="gatC"/>
    <property type="match status" value="1"/>
</dbReference>
<dbReference type="PANTHER" id="PTHR15004">
    <property type="entry name" value="GLUTAMYL-TRNA(GLN) AMIDOTRANSFERASE SUBUNIT C, MITOCHONDRIAL"/>
    <property type="match status" value="1"/>
</dbReference>
<dbReference type="PANTHER" id="PTHR15004:SF0">
    <property type="entry name" value="GLUTAMYL-TRNA(GLN) AMIDOTRANSFERASE SUBUNIT C, MITOCHONDRIAL"/>
    <property type="match status" value="1"/>
</dbReference>
<dbReference type="Pfam" id="PF02686">
    <property type="entry name" value="GatC"/>
    <property type="match status" value="1"/>
</dbReference>
<dbReference type="SUPFAM" id="SSF141000">
    <property type="entry name" value="Glu-tRNAGln amidotransferase C subunit"/>
    <property type="match status" value="1"/>
</dbReference>
<evidence type="ECO:0000255" key="1">
    <source>
        <dbReference type="HAMAP-Rule" id="MF_00122"/>
    </source>
</evidence>
<gene>
    <name evidence="1" type="primary">gatC</name>
    <name type="ordered locus">Swol_0372</name>
</gene>
<feature type="chain" id="PRO_1000076202" description="Aspartyl/glutamyl-tRNA(Asn/Gln) amidotransferase subunit C">
    <location>
        <begin position="1"/>
        <end position="94"/>
    </location>
</feature>
<keyword id="KW-0067">ATP-binding</keyword>
<keyword id="KW-0436">Ligase</keyword>
<keyword id="KW-0547">Nucleotide-binding</keyword>
<keyword id="KW-0648">Protein biosynthesis</keyword>
<keyword id="KW-1185">Reference proteome</keyword>
<proteinExistence type="inferred from homology"/>
<organism>
    <name type="scientific">Syntrophomonas wolfei subsp. wolfei (strain DSM 2245B / Goettingen)</name>
    <dbReference type="NCBI Taxonomy" id="335541"/>
    <lineage>
        <taxon>Bacteria</taxon>
        <taxon>Bacillati</taxon>
        <taxon>Bacillota</taxon>
        <taxon>Clostridia</taxon>
        <taxon>Eubacteriales</taxon>
        <taxon>Syntrophomonadaceae</taxon>
        <taxon>Syntrophomonas</taxon>
    </lineage>
</organism>
<sequence length="94" mass="10510">MALSPEEVNHVAMLARLALSEDEKTAFAEQLTLILDYVERLNELDTGEVEPLIHILPVFNVLRQDEALPGSSQEEILSNAPLVEDGQYKVPRII</sequence>
<reference key="1">
    <citation type="journal article" date="2010" name="Environ. Microbiol.">
        <title>The genome of Syntrophomonas wolfei: new insights into syntrophic metabolism and biohydrogen production.</title>
        <authorList>
            <person name="Sieber J.R."/>
            <person name="Sims D.R."/>
            <person name="Han C."/>
            <person name="Kim E."/>
            <person name="Lykidis A."/>
            <person name="Lapidus A.L."/>
            <person name="McDonnald E."/>
            <person name="Rohlin L."/>
            <person name="Culley D.E."/>
            <person name="Gunsalus R."/>
            <person name="McInerney M.J."/>
        </authorList>
    </citation>
    <scope>NUCLEOTIDE SEQUENCE [LARGE SCALE GENOMIC DNA]</scope>
    <source>
        <strain>DSM 2245B / Goettingen</strain>
    </source>
</reference>
<protein>
    <recommendedName>
        <fullName evidence="1">Aspartyl/glutamyl-tRNA(Asn/Gln) amidotransferase subunit C</fullName>
        <shortName evidence="1">Asp/Glu-ADT subunit C</shortName>
        <ecNumber evidence="1">6.3.5.-</ecNumber>
    </recommendedName>
</protein>